<proteinExistence type="inferred from homology"/>
<name>CAXA_ALKAM</name>
<sequence>MLVATIFVLVGLVLLIWSADRFVYGASSIARNLNISPMIIGLTIVAMGSSAPEIMVSATAAWQGRLDTAVGNALGSNITNILLVIGATALLKPIAVASMTIKREFPLLILVTLLGYLFLADQSLTRAEGALFLGGFVLFLVLMVYWGKHAPPDDPLLTEYQAELPPPTPTWQATVWLVLGLALLLASSQLLVHGAVTIASHFGMSDLLIGLTIIAIGTSLPELAASLIGILKGEDDLALGNIIGSNIFNILAVLGVGTIIAPGVIDAAAAGRDSYVMMAATLALLLMSLRLGKLRRINRVEGCILLMAFIGYQYLLFSS</sequence>
<feature type="chain" id="PRO_0000425721" description="Putative antiporter CaxA">
    <location>
        <begin position="1"/>
        <end position="319"/>
    </location>
</feature>
<feature type="transmembrane region" description="Helical" evidence="1">
    <location>
        <begin position="3"/>
        <end position="23"/>
    </location>
</feature>
<feature type="transmembrane region" description="Helical" evidence="1">
    <location>
        <begin position="38"/>
        <end position="58"/>
    </location>
</feature>
<feature type="transmembrane region" description="Helical" evidence="1">
    <location>
        <begin position="81"/>
        <end position="101"/>
    </location>
</feature>
<feature type="transmembrane region" description="Helical" evidence="1">
    <location>
        <begin position="105"/>
        <end position="125"/>
    </location>
</feature>
<feature type="transmembrane region" description="Helical" evidence="1">
    <location>
        <begin position="127"/>
        <end position="147"/>
    </location>
</feature>
<feature type="transmembrane region" description="Helical" evidence="1">
    <location>
        <begin position="175"/>
        <end position="195"/>
    </location>
</feature>
<feature type="transmembrane region" description="Helical" evidence="1">
    <location>
        <begin position="208"/>
        <end position="228"/>
    </location>
</feature>
<feature type="transmembrane region" description="Helical" evidence="1">
    <location>
        <begin position="250"/>
        <end position="270"/>
    </location>
</feature>
<feature type="transmembrane region" description="Helical" evidence="1">
    <location>
        <begin position="275"/>
        <end position="292"/>
    </location>
</feature>
<feature type="transmembrane region" description="Helical" evidence="1">
    <location>
        <begin position="297"/>
        <end position="317"/>
    </location>
</feature>
<evidence type="ECO:0000255" key="1"/>
<evidence type="ECO:0000269" key="2">
    <source>
    </source>
</evidence>
<evidence type="ECO:0000305" key="3"/>
<gene>
    <name type="primary">caxA</name>
    <name type="synonym">chaA</name>
</gene>
<keyword id="KW-0050">Antiport</keyword>
<keyword id="KW-1003">Cell membrane</keyword>
<keyword id="KW-0472">Membrane</keyword>
<keyword id="KW-0812">Transmembrane</keyword>
<keyword id="KW-1133">Transmembrane helix</keyword>
<keyword id="KW-0813">Transport</keyword>
<reference key="1">
    <citation type="journal article" date="2007" name="Microbiology">
        <title>Three putative cation/proton antiporters from the soda lake alkaliphile Alkalimonas amylolytica N10 complement an alkali-sensitive Escherichia coli mutant.</title>
        <authorList>
            <person name="Wei Y."/>
            <person name="Liu J."/>
            <person name="Ma Y."/>
            <person name="Krulwich T.A."/>
        </authorList>
    </citation>
    <scope>NUCLEOTIDE SEQUENCE [GENOMIC DNA]</scope>
    <scope>FUNCTION</scope>
    <scope>GENE NAME</scope>
    <source>
        <strain>DSM 18337 / CGMCC 1.3430 / N10</strain>
    </source>
</reference>
<dbReference type="EMBL" id="DQ649017">
    <property type="protein sequence ID" value="ABG37980.1"/>
    <property type="molecule type" value="Genomic_DNA"/>
</dbReference>
<dbReference type="RefSeq" id="WP_091339599.1">
    <property type="nucleotide sequence ID" value="NZ_FNRM01000001.1"/>
</dbReference>
<dbReference type="SMR" id="Q0ZAI3"/>
<dbReference type="STRING" id="152573.SAMN04488051_101627"/>
<dbReference type="TCDB" id="2.A.19.5.2">
    <property type="family name" value="the ca(2+):cation antiporter (caca) family"/>
</dbReference>
<dbReference type="OrthoDB" id="9794225at2"/>
<dbReference type="GO" id="GO:0005886">
    <property type="term" value="C:plasma membrane"/>
    <property type="evidence" value="ECO:0007669"/>
    <property type="project" value="UniProtKB-SubCell"/>
</dbReference>
<dbReference type="GO" id="GO:0005262">
    <property type="term" value="F:calcium channel activity"/>
    <property type="evidence" value="ECO:0007669"/>
    <property type="project" value="TreeGrafter"/>
</dbReference>
<dbReference type="GO" id="GO:0008273">
    <property type="term" value="F:calcium, potassium:sodium antiporter activity"/>
    <property type="evidence" value="ECO:0007669"/>
    <property type="project" value="TreeGrafter"/>
</dbReference>
<dbReference type="GO" id="GO:0006874">
    <property type="term" value="P:intracellular calcium ion homeostasis"/>
    <property type="evidence" value="ECO:0007669"/>
    <property type="project" value="TreeGrafter"/>
</dbReference>
<dbReference type="Gene3D" id="1.20.1420.30">
    <property type="entry name" value="NCX, central ion-binding region"/>
    <property type="match status" value="2"/>
</dbReference>
<dbReference type="InterPro" id="IPR004481">
    <property type="entry name" value="K/Na/Ca-exchanger"/>
</dbReference>
<dbReference type="InterPro" id="IPR004837">
    <property type="entry name" value="NaCa_Exmemb"/>
</dbReference>
<dbReference type="InterPro" id="IPR044880">
    <property type="entry name" value="NCX_ion-bd_dom_sf"/>
</dbReference>
<dbReference type="NCBIfam" id="TIGR00367">
    <property type="entry name" value="calcium/sodium antiporter"/>
    <property type="match status" value="1"/>
</dbReference>
<dbReference type="PANTHER" id="PTHR10846:SF8">
    <property type="entry name" value="INNER MEMBRANE PROTEIN YRBG"/>
    <property type="match status" value="1"/>
</dbReference>
<dbReference type="PANTHER" id="PTHR10846">
    <property type="entry name" value="SODIUM/POTASSIUM/CALCIUM EXCHANGER"/>
    <property type="match status" value="1"/>
</dbReference>
<dbReference type="Pfam" id="PF01699">
    <property type="entry name" value="Na_Ca_ex"/>
    <property type="match status" value="2"/>
</dbReference>
<organism>
    <name type="scientific">Alkalimonas amylolytica</name>
    <dbReference type="NCBI Taxonomy" id="152573"/>
    <lineage>
        <taxon>Bacteria</taxon>
        <taxon>Pseudomonadati</taxon>
        <taxon>Pseudomonadota</taxon>
        <taxon>Gammaproteobacteria</taxon>
        <taxon>Alkalimonas</taxon>
    </lineage>
</organism>
<protein>
    <recommendedName>
        <fullName>Putative antiporter CaxA</fullName>
    </recommendedName>
</protein>
<comment type="function">
    <text evidence="2">Confers modest Ca(2+) and Na(+) resistance.</text>
</comment>
<comment type="subcellular location">
    <subcellularLocation>
        <location evidence="3">Cell membrane</location>
        <topology evidence="3">Multi-pass membrane protein</topology>
    </subcellularLocation>
</comment>
<comment type="similarity">
    <text evidence="3">Belongs to the Ca(2+):cation antiporter (CaCA) (TC 2.A.19) family.</text>
</comment>
<accession>Q0ZAI3</accession>